<evidence type="ECO:0000255" key="1">
    <source>
        <dbReference type="HAMAP-Rule" id="MF_00407"/>
    </source>
</evidence>
<evidence type="ECO:0000269" key="2">
    <source>
    </source>
</evidence>
<evidence type="ECO:0000303" key="3">
    <source>
    </source>
</evidence>
<evidence type="ECO:0000305" key="4"/>
<keyword id="KW-0067">ATP-binding</keyword>
<keyword id="KW-0131">Cell cycle</keyword>
<keyword id="KW-0132">Cell division</keyword>
<keyword id="KW-0227">DNA damage</keyword>
<keyword id="KW-0233">DNA recombination</keyword>
<keyword id="KW-0234">DNA repair</keyword>
<keyword id="KW-0235">DNA replication</keyword>
<keyword id="KW-0342">GTP-binding</keyword>
<keyword id="KW-0436">Ligase</keyword>
<keyword id="KW-0460">Magnesium</keyword>
<keyword id="KW-0464">Manganese</keyword>
<keyword id="KW-0479">Metal-binding</keyword>
<keyword id="KW-0547">Nucleotide-binding</keyword>
<organism>
    <name type="scientific">Sulfophobococcus zilligii</name>
    <dbReference type="NCBI Taxonomy" id="53426"/>
    <lineage>
        <taxon>Archaea</taxon>
        <taxon>Thermoproteota</taxon>
        <taxon>Thermoprotei</taxon>
        <taxon>Desulfurococcales</taxon>
        <taxon>Desulfurococcaceae</taxon>
        <taxon>Sulfophobococcus</taxon>
    </lineage>
</organism>
<proteinExistence type="evidence at protein level"/>
<gene>
    <name evidence="1" type="primary">lig</name>
</gene>
<reference key="1">
    <citation type="journal article" date="2008" name="Environ. Microbiol.">
        <title>Novel DNA ligase with broad nucleotide cofactor specificity from the hyperthermophilic crenarchaeon Sulfophobococcus zilligii: influence of ancestral DNA ligase on cofactor utilization.</title>
        <authorList>
            <person name="Sun Y."/>
            <person name="Seo M.S."/>
            <person name="Kim J.H."/>
            <person name="Kim Y.J."/>
            <person name="Kim G.A."/>
            <person name="Lee J.I."/>
            <person name="Lee J.H."/>
            <person name="Kwon S.T."/>
        </authorList>
    </citation>
    <scope>NUCLEOTIDE SEQUENCE [GENOMIC DNA]</scope>
    <scope>FUNCTION</scope>
    <scope>CATALYTIC ACTIVITY</scope>
    <scope>COFACTOR</scope>
    <scope>BIOPHYSICOCHEMICAL PROPERTIES</scope>
</reference>
<name>DNLI_SULZI</name>
<accession>D2CJS7</accession>
<protein>
    <recommendedName>
        <fullName evidence="1 3">DNA ligase</fullName>
        <ecNumber evidence="2">6.5.1.7</ecNumber>
    </recommendedName>
    <alternativeName>
        <fullName evidence="4">Polydeoxyribonucleotide synthase [ATP/ADP/GTP]</fullName>
    </alternativeName>
</protein>
<feature type="chain" id="PRO_0000431839" description="DNA ligase">
    <location>
        <begin position="1"/>
        <end position="606"/>
    </location>
</feature>
<feature type="active site" description="N6-AMP-lysine intermediate" evidence="1">
    <location>
        <position position="265"/>
    </location>
</feature>
<feature type="binding site" evidence="1">
    <location>
        <position position="263"/>
    </location>
    <ligand>
        <name>ATP</name>
        <dbReference type="ChEBI" id="CHEBI:30616"/>
    </ligand>
</feature>
<feature type="binding site" evidence="1">
    <location>
        <position position="270"/>
    </location>
    <ligand>
        <name>ATP</name>
        <dbReference type="ChEBI" id="CHEBI:30616"/>
    </ligand>
</feature>
<feature type="binding site" evidence="1">
    <location>
        <position position="285"/>
    </location>
    <ligand>
        <name>ATP</name>
        <dbReference type="ChEBI" id="CHEBI:30616"/>
    </ligand>
</feature>
<feature type="binding site" evidence="1">
    <location>
        <position position="315"/>
    </location>
    <ligand>
        <name>ATP</name>
        <dbReference type="ChEBI" id="CHEBI:30616"/>
    </ligand>
</feature>
<feature type="binding site" evidence="1">
    <location>
        <position position="355"/>
    </location>
    <ligand>
        <name>ATP</name>
        <dbReference type="ChEBI" id="CHEBI:30616"/>
    </ligand>
</feature>
<feature type="binding site" evidence="1">
    <location>
        <position position="432"/>
    </location>
    <ligand>
        <name>ATP</name>
        <dbReference type="ChEBI" id="CHEBI:30616"/>
    </ligand>
</feature>
<feature type="binding site" evidence="1">
    <location>
        <position position="438"/>
    </location>
    <ligand>
        <name>ATP</name>
        <dbReference type="ChEBI" id="CHEBI:30616"/>
    </ligand>
</feature>
<sequence length="606" mass="68393">MPDMPLRILVETIERLELVTARTQLVAFLVNLFKQTPPEIIDKVVYLVQGILWPDWKGMPELGVGEKMLIKAISLACNISEREVEKTAKEIGDIGKATEKLKQTAQSKQTGLTIFAFTQQPTGLTVTNTYNTLVKIAMAQGEGSKDLKIRLLAGLLKDASPKEAKFIVKFVEGKLRVGIGDATIMDALAVTFGGGVANRPVIERAYNLRSDLGEVAKILASKGIEELKKIKPEVGVPIRPMLAERLSDPREILVKTGGEAFVEYKYDGERAQIHKKGDKIWIYSRRLENITSQYPDVVERALEKIKADEAIVEGEIVVYDPDTGELKPFQELMHRKRKHDIRQAIKEYPVKVFLFDLLYLNGEDYTLKPLPVRREALEKIIDKTEDFTIAEYIKTSNPEELEKFFLEAIGNGVEGVMAKAIHKDSIYQAGVRGWLWIKYKRDYKSEMADTVDLVVVGAFYGKGRRGGKYGALLMAAYNKEKDVFETVCKVGSGFKDEDLDKLPDMLKPYIRDRKHPRVVAEIEPDVWVDPVLVAEIIGAELTLSPIHTCAKGVIKPDAGISIRFPRFIRWRPDKRPEDATTSSELVEMYQRQLKKITTEQATQEQL</sequence>
<comment type="function">
    <text evidence="2">DNA ligase that seals nicks in double-stranded DNA during DNA replication, DNA recombination and DNA repair. Can use ATP, ADP and GTP, but not CTP, TTP or NAD(+).</text>
</comment>
<comment type="catalytic activity">
    <reaction evidence="1 2">
        <text>ATP + (deoxyribonucleotide)n-3'-hydroxyl + 5'-phospho-(deoxyribonucleotide)m = (deoxyribonucleotide)n+m + AMP + diphosphate.</text>
        <dbReference type="EC" id="6.5.1.7"/>
    </reaction>
</comment>
<comment type="catalytic activity">
    <reaction evidence="2">
        <text>ADP + (deoxyribonucleotide)n-3'-hydroxyl + 5'-phospho-(deoxyribonucleotide)m = (deoxyribonucleotide)n+m + AMP + phosphate.</text>
        <dbReference type="EC" id="6.5.1.7"/>
    </reaction>
</comment>
<comment type="catalytic activity">
    <reaction evidence="2">
        <text>GTP + (deoxyribonucleotide)n-3'-hydroxyl + 5'-phospho-(deoxyribonucleotide)m = (deoxyribonucleotide)n+m + GMP + diphosphate.</text>
        <dbReference type="EC" id="6.5.1.7"/>
    </reaction>
</comment>
<comment type="cofactor">
    <cofactor evidence="2">
        <name>Mg(2+)</name>
        <dbReference type="ChEBI" id="CHEBI:18420"/>
    </cofactor>
    <cofactor evidence="2">
        <name>Mn(2+)</name>
        <dbReference type="ChEBI" id="CHEBI:29035"/>
    </cofactor>
    <text evidence="2">Other divalent cations such as Zn(2+), Ni(2+), Ca(2+) and Co(2+) are not able to activate the enzyme.</text>
</comment>
<comment type="biophysicochemical properties">
    <phDependence>
        <text evidence="2">Optimum pH is 7.0.</text>
    </phDependence>
    <temperatureDependence>
        <text evidence="2">Optimum temperature is 75 degrees Celsius. Activity declines drastically at temperatures from 75 to 80 degrees Celsius.</text>
    </temperatureDependence>
</comment>
<comment type="similarity">
    <text evidence="1 4">Belongs to the ATP-dependent DNA ligase family.</text>
</comment>
<dbReference type="EC" id="6.5.1.7" evidence="2"/>
<dbReference type="EMBL" id="EF506613">
    <property type="protein sequence ID" value="ABS72370.1"/>
    <property type="molecule type" value="Genomic_DNA"/>
</dbReference>
<dbReference type="SMR" id="D2CJS7"/>
<dbReference type="KEGG" id="ag:ABS72370"/>
<dbReference type="GO" id="GO:0005524">
    <property type="term" value="F:ATP binding"/>
    <property type="evidence" value="ECO:0007669"/>
    <property type="project" value="UniProtKB-UniRule"/>
</dbReference>
<dbReference type="GO" id="GO:0003677">
    <property type="term" value="F:DNA binding"/>
    <property type="evidence" value="ECO:0007669"/>
    <property type="project" value="InterPro"/>
</dbReference>
<dbReference type="GO" id="GO:0003910">
    <property type="term" value="F:DNA ligase (ATP) activity"/>
    <property type="evidence" value="ECO:0007669"/>
    <property type="project" value="UniProtKB-UniRule"/>
</dbReference>
<dbReference type="GO" id="GO:0005525">
    <property type="term" value="F:GTP binding"/>
    <property type="evidence" value="ECO:0007669"/>
    <property type="project" value="UniProtKB-KW"/>
</dbReference>
<dbReference type="GO" id="GO:0046872">
    <property type="term" value="F:metal ion binding"/>
    <property type="evidence" value="ECO:0007669"/>
    <property type="project" value="UniProtKB-KW"/>
</dbReference>
<dbReference type="GO" id="GO:0051301">
    <property type="term" value="P:cell division"/>
    <property type="evidence" value="ECO:0007669"/>
    <property type="project" value="UniProtKB-KW"/>
</dbReference>
<dbReference type="GO" id="GO:0071897">
    <property type="term" value="P:DNA biosynthetic process"/>
    <property type="evidence" value="ECO:0007669"/>
    <property type="project" value="InterPro"/>
</dbReference>
<dbReference type="GO" id="GO:0006310">
    <property type="term" value="P:DNA recombination"/>
    <property type="evidence" value="ECO:0007669"/>
    <property type="project" value="UniProtKB-UniRule"/>
</dbReference>
<dbReference type="GO" id="GO:0006281">
    <property type="term" value="P:DNA repair"/>
    <property type="evidence" value="ECO:0007669"/>
    <property type="project" value="UniProtKB-UniRule"/>
</dbReference>
<dbReference type="GO" id="GO:0006273">
    <property type="term" value="P:lagging strand elongation"/>
    <property type="evidence" value="ECO:0007669"/>
    <property type="project" value="TreeGrafter"/>
</dbReference>
<dbReference type="CDD" id="cd07901">
    <property type="entry name" value="Adenylation_DNA_ligase_Arch_LigB"/>
    <property type="match status" value="1"/>
</dbReference>
<dbReference type="CDD" id="cd07969">
    <property type="entry name" value="OBF_DNA_ligase_I"/>
    <property type="match status" value="1"/>
</dbReference>
<dbReference type="FunFam" id="1.10.3260.10:FF:000007">
    <property type="entry name" value="DNA ligase"/>
    <property type="match status" value="1"/>
</dbReference>
<dbReference type="FunFam" id="2.40.50.140:FF:000062">
    <property type="entry name" value="DNA ligase"/>
    <property type="match status" value="1"/>
</dbReference>
<dbReference type="FunFam" id="3.30.470.30:FF:000012">
    <property type="entry name" value="Probable DNA ligase"/>
    <property type="match status" value="1"/>
</dbReference>
<dbReference type="Gene3D" id="1.10.3260.10">
    <property type="entry name" value="DNA ligase, ATP-dependent, N-terminal domain"/>
    <property type="match status" value="1"/>
</dbReference>
<dbReference type="Gene3D" id="3.30.470.30">
    <property type="entry name" value="DNA ligase/mRNA capping enzyme"/>
    <property type="match status" value="1"/>
</dbReference>
<dbReference type="Gene3D" id="2.40.50.140">
    <property type="entry name" value="Nucleic acid-binding proteins"/>
    <property type="match status" value="1"/>
</dbReference>
<dbReference type="HAMAP" id="MF_00407">
    <property type="entry name" value="DNA_ligase"/>
    <property type="match status" value="1"/>
</dbReference>
<dbReference type="InterPro" id="IPR050191">
    <property type="entry name" value="ATP-dep_DNA_ligase"/>
</dbReference>
<dbReference type="InterPro" id="IPR022865">
    <property type="entry name" value="DNA_ligae_ATP-dep_bac/arc"/>
</dbReference>
<dbReference type="InterPro" id="IPR000977">
    <property type="entry name" value="DNA_ligase_ATP-dep"/>
</dbReference>
<dbReference type="InterPro" id="IPR012309">
    <property type="entry name" value="DNA_ligase_ATP-dep_C"/>
</dbReference>
<dbReference type="InterPro" id="IPR012310">
    <property type="entry name" value="DNA_ligase_ATP-dep_cent"/>
</dbReference>
<dbReference type="InterPro" id="IPR016059">
    <property type="entry name" value="DNA_ligase_ATP-dep_CS"/>
</dbReference>
<dbReference type="InterPro" id="IPR012308">
    <property type="entry name" value="DNA_ligase_ATP-dep_N"/>
</dbReference>
<dbReference type="InterPro" id="IPR036599">
    <property type="entry name" value="DNA_ligase_N_sf"/>
</dbReference>
<dbReference type="InterPro" id="IPR012340">
    <property type="entry name" value="NA-bd_OB-fold"/>
</dbReference>
<dbReference type="NCBIfam" id="TIGR00574">
    <property type="entry name" value="dnl1"/>
    <property type="match status" value="1"/>
</dbReference>
<dbReference type="PANTHER" id="PTHR45674:SF4">
    <property type="entry name" value="DNA LIGASE 1"/>
    <property type="match status" value="1"/>
</dbReference>
<dbReference type="PANTHER" id="PTHR45674">
    <property type="entry name" value="DNA LIGASE 1/3 FAMILY MEMBER"/>
    <property type="match status" value="1"/>
</dbReference>
<dbReference type="Pfam" id="PF04679">
    <property type="entry name" value="DNA_ligase_A_C"/>
    <property type="match status" value="1"/>
</dbReference>
<dbReference type="Pfam" id="PF01068">
    <property type="entry name" value="DNA_ligase_A_M"/>
    <property type="match status" value="1"/>
</dbReference>
<dbReference type="Pfam" id="PF04675">
    <property type="entry name" value="DNA_ligase_A_N"/>
    <property type="match status" value="1"/>
</dbReference>
<dbReference type="SUPFAM" id="SSF117018">
    <property type="entry name" value="ATP-dependent DNA ligase DNA-binding domain"/>
    <property type="match status" value="1"/>
</dbReference>
<dbReference type="SUPFAM" id="SSF56091">
    <property type="entry name" value="DNA ligase/mRNA capping enzyme, catalytic domain"/>
    <property type="match status" value="1"/>
</dbReference>
<dbReference type="SUPFAM" id="SSF50249">
    <property type="entry name" value="Nucleic acid-binding proteins"/>
    <property type="match status" value="1"/>
</dbReference>
<dbReference type="PROSITE" id="PS00697">
    <property type="entry name" value="DNA_LIGASE_A1"/>
    <property type="match status" value="1"/>
</dbReference>
<dbReference type="PROSITE" id="PS00333">
    <property type="entry name" value="DNA_LIGASE_A2"/>
    <property type="match status" value="1"/>
</dbReference>
<dbReference type="PROSITE" id="PS50160">
    <property type="entry name" value="DNA_LIGASE_A3"/>
    <property type="match status" value="1"/>
</dbReference>